<sequence>MQSIVLILILQLVYVPFLTLRTIFLVKNITFLAAIFGMLEMLVYVFGLSLVFSGKQSMLAMVVYAVGFGLGIFLGAKIERKLAIGYVYTTINTQNKNEELVRFLRNEGFAVTIYVGEGRDSNRYKYEILTKRNRETELFQIVEQFEPNAFIISYEPKSFKGGFLLARMKAKQK</sequence>
<name>Y745_LYSSC</name>
<comment type="subcellular location">
    <subcellularLocation>
        <location evidence="1">Cell membrane</location>
        <topology evidence="1">Multi-pass membrane protein</topology>
    </subcellularLocation>
</comment>
<comment type="similarity">
    <text evidence="1">Belongs to the UPF0316 family.</text>
</comment>
<accession>B1HYA2</accession>
<reference key="1">
    <citation type="journal article" date="2008" name="J. Bacteriol.">
        <title>Complete genome sequence of the mosquitocidal bacterium Bacillus sphaericus C3-41 and comparison with those of closely related Bacillus species.</title>
        <authorList>
            <person name="Hu X."/>
            <person name="Fan W."/>
            <person name="Han B."/>
            <person name="Liu H."/>
            <person name="Zheng D."/>
            <person name="Li Q."/>
            <person name="Dong W."/>
            <person name="Yan J."/>
            <person name="Gao M."/>
            <person name="Berry C."/>
            <person name="Yuan Z."/>
        </authorList>
    </citation>
    <scope>NUCLEOTIDE SEQUENCE [LARGE SCALE GENOMIC DNA]</scope>
    <source>
        <strain>C3-41</strain>
    </source>
</reference>
<evidence type="ECO:0000255" key="1">
    <source>
        <dbReference type="HAMAP-Rule" id="MF_01515"/>
    </source>
</evidence>
<feature type="chain" id="PRO_1000198423" description="UPF0316 protein Bsph_0745">
    <location>
        <begin position="1"/>
        <end position="173"/>
    </location>
</feature>
<feature type="transmembrane region" description="Helical" evidence="1">
    <location>
        <begin position="4"/>
        <end position="24"/>
    </location>
</feature>
<feature type="transmembrane region" description="Helical" evidence="1">
    <location>
        <begin position="31"/>
        <end position="51"/>
    </location>
</feature>
<feature type="transmembrane region" description="Helical" evidence="1">
    <location>
        <begin position="58"/>
        <end position="78"/>
    </location>
</feature>
<keyword id="KW-1003">Cell membrane</keyword>
<keyword id="KW-0472">Membrane</keyword>
<keyword id="KW-0812">Transmembrane</keyword>
<keyword id="KW-1133">Transmembrane helix</keyword>
<dbReference type="EMBL" id="CP000817">
    <property type="protein sequence ID" value="ACA38363.1"/>
    <property type="molecule type" value="Genomic_DNA"/>
</dbReference>
<dbReference type="RefSeq" id="WP_012292513.1">
    <property type="nucleotide sequence ID" value="NC_010382.1"/>
</dbReference>
<dbReference type="SMR" id="B1HYA2"/>
<dbReference type="EnsemblBacteria" id="ACA38363">
    <property type="protein sequence ID" value="ACA38363"/>
    <property type="gene ID" value="Bsph_0745"/>
</dbReference>
<dbReference type="KEGG" id="lsp:Bsph_0745"/>
<dbReference type="HOGENOM" id="CLU_106166_1_1_9"/>
<dbReference type="Proteomes" id="UP000002164">
    <property type="component" value="Chromosome"/>
</dbReference>
<dbReference type="GO" id="GO:0005886">
    <property type="term" value="C:plasma membrane"/>
    <property type="evidence" value="ECO:0007669"/>
    <property type="project" value="UniProtKB-SubCell"/>
</dbReference>
<dbReference type="CDD" id="cd16381">
    <property type="entry name" value="YitT_C_like_1"/>
    <property type="match status" value="1"/>
</dbReference>
<dbReference type="HAMAP" id="MF_01515">
    <property type="entry name" value="UPF0316"/>
    <property type="match status" value="1"/>
</dbReference>
<dbReference type="InterPro" id="IPR019264">
    <property type="entry name" value="DUF2179"/>
</dbReference>
<dbReference type="InterPro" id="IPR044035">
    <property type="entry name" value="DUF5698"/>
</dbReference>
<dbReference type="InterPro" id="IPR022930">
    <property type="entry name" value="UPF0316"/>
</dbReference>
<dbReference type="NCBIfam" id="NF003194">
    <property type="entry name" value="PRK04164.1-5"/>
    <property type="match status" value="1"/>
</dbReference>
<dbReference type="PANTHER" id="PTHR40060">
    <property type="entry name" value="UPF0316 PROTEIN YEBE"/>
    <property type="match status" value="1"/>
</dbReference>
<dbReference type="PANTHER" id="PTHR40060:SF1">
    <property type="entry name" value="UPF0316 PROTEIN YEBE"/>
    <property type="match status" value="1"/>
</dbReference>
<dbReference type="Pfam" id="PF10035">
    <property type="entry name" value="DUF2179"/>
    <property type="match status" value="1"/>
</dbReference>
<dbReference type="Pfam" id="PF18955">
    <property type="entry name" value="DUF5698"/>
    <property type="match status" value="1"/>
</dbReference>
<organism>
    <name type="scientific">Lysinibacillus sphaericus (strain C3-41)</name>
    <dbReference type="NCBI Taxonomy" id="444177"/>
    <lineage>
        <taxon>Bacteria</taxon>
        <taxon>Bacillati</taxon>
        <taxon>Bacillota</taxon>
        <taxon>Bacilli</taxon>
        <taxon>Bacillales</taxon>
        <taxon>Bacillaceae</taxon>
        <taxon>Lysinibacillus</taxon>
    </lineage>
</organism>
<protein>
    <recommendedName>
        <fullName evidence="1">UPF0316 protein Bsph_0745</fullName>
    </recommendedName>
</protein>
<gene>
    <name type="ordered locus">Bsph_0745</name>
</gene>
<proteinExistence type="inferred from homology"/>